<accession>Q9F326</accession>
<accession>Q5IBS1</accession>
<feature type="chain" id="PRO_0000293968" description="Superoxide dismutase [Mn/Fe]">
    <location>
        <begin position="1"/>
        <end position="201"/>
    </location>
</feature>
<feature type="binding site" evidence="2">
    <location>
        <position position="27"/>
    </location>
    <ligand>
        <name>Fe(3+)</name>
        <dbReference type="ChEBI" id="CHEBI:29034"/>
    </ligand>
</feature>
<feature type="binding site" evidence="2">
    <location>
        <position position="27"/>
    </location>
    <ligand>
        <name>Mn(2+)</name>
        <dbReference type="ChEBI" id="CHEBI:29035"/>
    </ligand>
</feature>
<feature type="binding site" evidence="2">
    <location>
        <position position="81"/>
    </location>
    <ligand>
        <name>Fe(3+)</name>
        <dbReference type="ChEBI" id="CHEBI:29034"/>
    </ligand>
</feature>
<feature type="binding site" evidence="2">
    <location>
        <position position="81"/>
    </location>
    <ligand>
        <name>Mn(2+)</name>
        <dbReference type="ChEBI" id="CHEBI:29035"/>
    </ligand>
</feature>
<feature type="binding site" evidence="2">
    <location>
        <position position="162"/>
    </location>
    <ligand>
        <name>Fe(3+)</name>
        <dbReference type="ChEBI" id="CHEBI:29034"/>
    </ligand>
</feature>
<feature type="binding site" evidence="2">
    <location>
        <position position="162"/>
    </location>
    <ligand>
        <name>Mn(2+)</name>
        <dbReference type="ChEBI" id="CHEBI:29035"/>
    </ligand>
</feature>
<feature type="binding site" evidence="2">
    <location>
        <position position="166"/>
    </location>
    <ligand>
        <name>Fe(3+)</name>
        <dbReference type="ChEBI" id="CHEBI:29034"/>
    </ligand>
</feature>
<feature type="binding site" evidence="2">
    <location>
        <position position="166"/>
    </location>
    <ligand>
        <name>Mn(2+)</name>
        <dbReference type="ChEBI" id="CHEBI:29035"/>
    </ligand>
</feature>
<dbReference type="EC" id="1.15.1.1" evidence="2"/>
<dbReference type="EMBL" id="AJ295150">
    <property type="protein sequence ID" value="CAC14833.1"/>
    <property type="molecule type" value="Genomic_DNA"/>
</dbReference>
<dbReference type="EMBL" id="AY795886">
    <property type="protein sequence ID" value="AAW32466.1"/>
    <property type="molecule type" value="Genomic_DNA"/>
</dbReference>
<dbReference type="RefSeq" id="WP_015900423.1">
    <property type="nucleotide sequence ID" value="NZ_UHCY01000001.1"/>
</dbReference>
<dbReference type="SMR" id="Q9F326"/>
<dbReference type="PATRIC" id="fig|1281.6.peg.252"/>
<dbReference type="OMA" id="DSLINWD"/>
<dbReference type="GO" id="GO:0005737">
    <property type="term" value="C:cytoplasm"/>
    <property type="evidence" value="ECO:0007669"/>
    <property type="project" value="TreeGrafter"/>
</dbReference>
<dbReference type="GO" id="GO:0046872">
    <property type="term" value="F:metal ion binding"/>
    <property type="evidence" value="ECO:0007669"/>
    <property type="project" value="UniProtKB-KW"/>
</dbReference>
<dbReference type="GO" id="GO:0004784">
    <property type="term" value="F:superoxide dismutase activity"/>
    <property type="evidence" value="ECO:0007669"/>
    <property type="project" value="UniProtKB-EC"/>
</dbReference>
<dbReference type="FunFam" id="1.10.287.990:FF:000001">
    <property type="entry name" value="Superoxide dismutase"/>
    <property type="match status" value="1"/>
</dbReference>
<dbReference type="FunFam" id="3.55.40.20:FF:000001">
    <property type="entry name" value="Superoxide dismutase"/>
    <property type="match status" value="1"/>
</dbReference>
<dbReference type="Gene3D" id="1.10.287.990">
    <property type="entry name" value="Fe,Mn superoxide dismutase (SOD) domain"/>
    <property type="match status" value="1"/>
</dbReference>
<dbReference type="Gene3D" id="3.55.40.20">
    <property type="entry name" value="Iron/manganese superoxide dismutase, C-terminal domain"/>
    <property type="match status" value="1"/>
</dbReference>
<dbReference type="InterPro" id="IPR001189">
    <property type="entry name" value="Mn/Fe_SOD"/>
</dbReference>
<dbReference type="InterPro" id="IPR019833">
    <property type="entry name" value="Mn/Fe_SOD_BS"/>
</dbReference>
<dbReference type="InterPro" id="IPR019832">
    <property type="entry name" value="Mn/Fe_SOD_C"/>
</dbReference>
<dbReference type="InterPro" id="IPR019831">
    <property type="entry name" value="Mn/Fe_SOD_N"/>
</dbReference>
<dbReference type="InterPro" id="IPR036324">
    <property type="entry name" value="Mn/Fe_SOD_N_sf"/>
</dbReference>
<dbReference type="InterPro" id="IPR036314">
    <property type="entry name" value="SOD_C_sf"/>
</dbReference>
<dbReference type="PANTHER" id="PTHR43595">
    <property type="entry name" value="37S RIBOSOMAL PROTEIN S26, MITOCHONDRIAL"/>
    <property type="match status" value="1"/>
</dbReference>
<dbReference type="PANTHER" id="PTHR43595:SF2">
    <property type="entry name" value="SMALL RIBOSOMAL SUBUNIT PROTEIN MS42"/>
    <property type="match status" value="1"/>
</dbReference>
<dbReference type="Pfam" id="PF02777">
    <property type="entry name" value="Sod_Fe_C"/>
    <property type="match status" value="1"/>
</dbReference>
<dbReference type="Pfam" id="PF00081">
    <property type="entry name" value="Sod_Fe_N"/>
    <property type="match status" value="1"/>
</dbReference>
<dbReference type="PIRSF" id="PIRSF000349">
    <property type="entry name" value="SODismutase"/>
    <property type="match status" value="1"/>
</dbReference>
<dbReference type="PRINTS" id="PR01703">
    <property type="entry name" value="MNSODISMTASE"/>
</dbReference>
<dbReference type="SUPFAM" id="SSF54719">
    <property type="entry name" value="Fe,Mn superoxide dismutase (SOD), C-terminal domain"/>
    <property type="match status" value="1"/>
</dbReference>
<dbReference type="SUPFAM" id="SSF46609">
    <property type="entry name" value="Fe,Mn superoxide dismutase (SOD), N-terminal domain"/>
    <property type="match status" value="1"/>
</dbReference>
<dbReference type="PROSITE" id="PS00088">
    <property type="entry name" value="SOD_MN"/>
    <property type="match status" value="1"/>
</dbReference>
<reference key="1">
    <citation type="journal article" date="2001" name="J. Appl. Microbiol.">
        <title>Characterization of catalase and superoxide dismutase in Staphylococcus carnosus 833 strain.</title>
        <authorList>
            <person name="Barriere C."/>
            <person name="Leroy-Setrin S."/>
            <person name="Talon R."/>
        </authorList>
    </citation>
    <scope>NUCLEOTIDE SEQUENCE [GENOMIC DNA]</scope>
    <scope>FUNCTION</scope>
    <source>
        <strain>833</strain>
    </source>
</reference>
<reference key="2">
    <citation type="journal article" date="2006" name="Int. J. Food Microbiol.">
        <title>Staphylococcal community of a small unit manufacturing traditional dry fermented sausages.</title>
        <authorList>
            <person name="Corbiere Morot-Bizot S."/>
            <person name="Leroy S."/>
            <person name="Talon R."/>
        </authorList>
    </citation>
    <scope>NUCLEOTIDE SEQUENCE [GENOMIC DNA] OF 18-161</scope>
    <source>
        <strain>CIT S00-298</strain>
    </source>
</reference>
<comment type="function">
    <text evidence="2">Destroys superoxide anion radicals which are normally produced within the cells and which are toxic to biological systems. Catalyzes the dismutation of superoxide anion radicals into O2 and H2O2 by successive reduction and oxidation of the transition metal ion at the active site.</text>
</comment>
<comment type="catalytic activity">
    <reaction evidence="2">
        <text>2 superoxide + 2 H(+) = H2O2 + O2</text>
        <dbReference type="Rhea" id="RHEA:20696"/>
        <dbReference type="ChEBI" id="CHEBI:15378"/>
        <dbReference type="ChEBI" id="CHEBI:15379"/>
        <dbReference type="ChEBI" id="CHEBI:16240"/>
        <dbReference type="ChEBI" id="CHEBI:18421"/>
        <dbReference type="EC" id="1.15.1.1"/>
    </reaction>
    <physiologicalReaction direction="left-to-right" evidence="2">
        <dbReference type="Rhea" id="RHEA:20697"/>
    </physiologicalReaction>
</comment>
<comment type="cofactor">
    <cofactor evidence="2">
        <name>Mn(2+)</name>
        <dbReference type="ChEBI" id="CHEBI:29035"/>
    </cofactor>
    <cofactor evidence="2">
        <name>Fe(3+)</name>
        <dbReference type="ChEBI" id="CHEBI:29034"/>
    </cofactor>
    <text evidence="2">Binds 1 Mn(2+) or Fe(3+) ion per subunit.</text>
</comment>
<comment type="subunit">
    <text evidence="1">Homodimer.</text>
</comment>
<comment type="miscellaneous">
    <text>SOD activity increases in mid-exponential growth-phase.</text>
</comment>
<comment type="similarity">
    <text evidence="3">Belongs to the iron/manganese superoxide dismutase family.</text>
</comment>
<keyword id="KW-0408">Iron</keyword>
<keyword id="KW-0464">Manganese</keyword>
<keyword id="KW-0479">Metal-binding</keyword>
<keyword id="KW-0560">Oxidoreductase</keyword>
<keyword id="KW-0346">Stress response</keyword>
<gene>
    <name type="primary">sodA</name>
    <name type="synonym">sod</name>
</gene>
<name>SODM_STACA</name>
<organism>
    <name type="scientific">Staphylococcus carnosus</name>
    <dbReference type="NCBI Taxonomy" id="1281"/>
    <lineage>
        <taxon>Bacteria</taxon>
        <taxon>Bacillati</taxon>
        <taxon>Bacillota</taxon>
        <taxon>Bacilli</taxon>
        <taxon>Bacillales</taxon>
        <taxon>Staphylococcaceae</taxon>
        <taxon>Staphylococcus</taxon>
    </lineage>
</organism>
<proteinExistence type="inferred from homology"/>
<evidence type="ECO:0000250" key="1"/>
<evidence type="ECO:0000250" key="2">
    <source>
        <dbReference type="UniProtKB" id="P80293"/>
    </source>
</evidence>
<evidence type="ECO:0000305" key="3"/>
<sequence length="201" mass="22980">MAFELPNLPYEFDALEPYIDKETMEIHHDKHHNTYVTKLNAAIEGTDLENKSIEEIVANLDSVPSDIQTAVRNNGGGHLNHSLFWQLLTPNSEEKGTVIDKIKEEWGSLDKFKDEFAKKAAGQFGSGWAWLVVDKDGKLEIVSTPNQDNPITEGKTPILGLDVWEHAYYLKYQNKRPDYIDAFWNVVNWNKVDELYEAATK</sequence>
<protein>
    <recommendedName>
        <fullName>Superoxide dismutase [Mn/Fe]</fullName>
        <ecNumber evidence="2">1.15.1.1</ecNumber>
    </recommendedName>
</protein>